<reference key="1">
    <citation type="journal article" date="1997" name="Microbiology">
        <title>Analysis of the Bacillus subtilis genome: cloning and nucleotide sequence of a 62 kb region between 275 degrees (rrnB) and 284 degrees (pai).</title>
        <authorList>
            <person name="Oudega B."/>
            <person name="Koningstein G."/>
            <person name="Rodrigues L."/>
            <person name="de Sales Ramon M."/>
            <person name="Hilbert H."/>
            <person name="Duesterhoeft A."/>
            <person name="Pohl T.M."/>
            <person name="Weitzenegger T."/>
        </authorList>
    </citation>
    <scope>NUCLEOTIDE SEQUENCE [GENOMIC DNA]</scope>
    <source>
        <strain>168</strain>
    </source>
</reference>
<reference key="2">
    <citation type="journal article" date="1997" name="Nature">
        <title>The complete genome sequence of the Gram-positive bacterium Bacillus subtilis.</title>
        <authorList>
            <person name="Kunst F."/>
            <person name="Ogasawara N."/>
            <person name="Moszer I."/>
            <person name="Albertini A.M."/>
            <person name="Alloni G."/>
            <person name="Azevedo V."/>
            <person name="Bertero M.G."/>
            <person name="Bessieres P."/>
            <person name="Bolotin A."/>
            <person name="Borchert S."/>
            <person name="Borriss R."/>
            <person name="Boursier L."/>
            <person name="Brans A."/>
            <person name="Braun M."/>
            <person name="Brignell S.C."/>
            <person name="Bron S."/>
            <person name="Brouillet S."/>
            <person name="Bruschi C.V."/>
            <person name="Caldwell B."/>
            <person name="Capuano V."/>
            <person name="Carter N.M."/>
            <person name="Choi S.-K."/>
            <person name="Codani J.-J."/>
            <person name="Connerton I.F."/>
            <person name="Cummings N.J."/>
            <person name="Daniel R.A."/>
            <person name="Denizot F."/>
            <person name="Devine K.M."/>
            <person name="Duesterhoeft A."/>
            <person name="Ehrlich S.D."/>
            <person name="Emmerson P.T."/>
            <person name="Entian K.-D."/>
            <person name="Errington J."/>
            <person name="Fabret C."/>
            <person name="Ferrari E."/>
            <person name="Foulger D."/>
            <person name="Fritz C."/>
            <person name="Fujita M."/>
            <person name="Fujita Y."/>
            <person name="Fuma S."/>
            <person name="Galizzi A."/>
            <person name="Galleron N."/>
            <person name="Ghim S.-Y."/>
            <person name="Glaser P."/>
            <person name="Goffeau A."/>
            <person name="Golightly E.J."/>
            <person name="Grandi G."/>
            <person name="Guiseppi G."/>
            <person name="Guy B.J."/>
            <person name="Haga K."/>
            <person name="Haiech J."/>
            <person name="Harwood C.R."/>
            <person name="Henaut A."/>
            <person name="Hilbert H."/>
            <person name="Holsappel S."/>
            <person name="Hosono S."/>
            <person name="Hullo M.-F."/>
            <person name="Itaya M."/>
            <person name="Jones L.-M."/>
            <person name="Joris B."/>
            <person name="Karamata D."/>
            <person name="Kasahara Y."/>
            <person name="Klaerr-Blanchard M."/>
            <person name="Klein C."/>
            <person name="Kobayashi Y."/>
            <person name="Koetter P."/>
            <person name="Koningstein G."/>
            <person name="Krogh S."/>
            <person name="Kumano M."/>
            <person name="Kurita K."/>
            <person name="Lapidus A."/>
            <person name="Lardinois S."/>
            <person name="Lauber J."/>
            <person name="Lazarevic V."/>
            <person name="Lee S.-M."/>
            <person name="Levine A."/>
            <person name="Liu H."/>
            <person name="Masuda S."/>
            <person name="Mauel C."/>
            <person name="Medigue C."/>
            <person name="Medina N."/>
            <person name="Mellado R.P."/>
            <person name="Mizuno M."/>
            <person name="Moestl D."/>
            <person name="Nakai S."/>
            <person name="Noback M."/>
            <person name="Noone D."/>
            <person name="O'Reilly M."/>
            <person name="Ogawa K."/>
            <person name="Ogiwara A."/>
            <person name="Oudega B."/>
            <person name="Park S.-H."/>
            <person name="Parro V."/>
            <person name="Pohl T.M."/>
            <person name="Portetelle D."/>
            <person name="Porwollik S."/>
            <person name="Prescott A.M."/>
            <person name="Presecan E."/>
            <person name="Pujic P."/>
            <person name="Purnelle B."/>
            <person name="Rapoport G."/>
            <person name="Rey M."/>
            <person name="Reynolds S."/>
            <person name="Rieger M."/>
            <person name="Rivolta C."/>
            <person name="Rocha E."/>
            <person name="Roche B."/>
            <person name="Rose M."/>
            <person name="Sadaie Y."/>
            <person name="Sato T."/>
            <person name="Scanlan E."/>
            <person name="Schleich S."/>
            <person name="Schroeter R."/>
            <person name="Scoffone F."/>
            <person name="Sekiguchi J."/>
            <person name="Sekowska A."/>
            <person name="Seror S.J."/>
            <person name="Serror P."/>
            <person name="Shin B.-S."/>
            <person name="Soldo B."/>
            <person name="Sorokin A."/>
            <person name="Tacconi E."/>
            <person name="Takagi T."/>
            <person name="Takahashi H."/>
            <person name="Takemaru K."/>
            <person name="Takeuchi M."/>
            <person name="Tamakoshi A."/>
            <person name="Tanaka T."/>
            <person name="Terpstra P."/>
            <person name="Tognoni A."/>
            <person name="Tosato V."/>
            <person name="Uchiyama S."/>
            <person name="Vandenbol M."/>
            <person name="Vannier F."/>
            <person name="Vassarotti A."/>
            <person name="Viari A."/>
            <person name="Wambutt R."/>
            <person name="Wedler E."/>
            <person name="Wedler H."/>
            <person name="Weitzenegger T."/>
            <person name="Winters P."/>
            <person name="Wipat A."/>
            <person name="Yamamoto H."/>
            <person name="Yamane K."/>
            <person name="Yasumoto K."/>
            <person name="Yata K."/>
            <person name="Yoshida K."/>
            <person name="Yoshikawa H.-F."/>
            <person name="Zumstein E."/>
            <person name="Yoshikawa H."/>
            <person name="Danchin A."/>
        </authorList>
    </citation>
    <scope>NUCLEOTIDE SEQUENCE [LARGE SCALE GENOMIC DNA]</scope>
    <source>
        <strain>168</strain>
    </source>
</reference>
<reference key="3">
    <citation type="journal article" date="2011" name="J. Bacteriol.">
        <title>CodY-mediated regulation of guanosine uptake in Bacillus subtilis.</title>
        <authorList>
            <person name="Belitsky B.R."/>
            <person name="Sonenshein A.L."/>
        </authorList>
    </citation>
    <scope>FUNCTION</scope>
    <scope>SUBUNIT</scope>
    <scope>INDUCTION</scope>
    <source>
        <strain>168 / SMY</strain>
    </source>
</reference>
<evidence type="ECO:0000255" key="1">
    <source>
        <dbReference type="PROSITE-ProRule" id="PRU00434"/>
    </source>
</evidence>
<evidence type="ECO:0000269" key="2">
    <source>
    </source>
</evidence>
<evidence type="ECO:0000303" key="3">
    <source>
    </source>
</evidence>
<evidence type="ECO:0000305" key="4"/>
<evidence type="ECO:0000305" key="5">
    <source>
    </source>
</evidence>
<name>NUPO_BACSU</name>
<comment type="function">
    <text evidence="2 4">Part of an ABC transporter complex involved in the uptake of guanosine (PubMed:21926227). Responsible for energy coupling to the transport system (Probable). May be a nucleoside transporter of broad specificity but with various affinities for different substrates (PubMed:21926227).</text>
</comment>
<comment type="subunit">
    <text evidence="5">The complex is composed of two ATP-binding proteins (NupO), two transmembrane proteins (NupP and NupQ) and a solute-binding protein (NupN).</text>
</comment>
<comment type="subcellular location">
    <subcellularLocation>
        <location evidence="4">Cell membrane</location>
        <topology evidence="4">Peripheral membrane protein</topology>
    </subcellularLocation>
</comment>
<comment type="induction">
    <text evidence="2">Transcriptionally regulated by CodY.</text>
</comment>
<comment type="similarity">
    <text evidence="4">Belongs to the ABC transporter superfamily.</text>
</comment>
<dbReference type="EC" id="7.6.2.-" evidence="5"/>
<dbReference type="EMBL" id="Z93937">
    <property type="protein sequence ID" value="CAB07937.1"/>
    <property type="molecule type" value="Genomic_DNA"/>
</dbReference>
<dbReference type="EMBL" id="AL009126">
    <property type="protein sequence ID" value="CAB15144.1"/>
    <property type="molecule type" value="Genomic_DNA"/>
</dbReference>
<dbReference type="PIR" id="D70009">
    <property type="entry name" value="D70009"/>
</dbReference>
<dbReference type="RefSeq" id="NP_391033.1">
    <property type="nucleotide sequence ID" value="NC_000964.3"/>
</dbReference>
<dbReference type="RefSeq" id="WP_003228830.1">
    <property type="nucleotide sequence ID" value="NZ_OZ025638.1"/>
</dbReference>
<dbReference type="SMR" id="O05253"/>
<dbReference type="FunCoup" id="O05253">
    <property type="interactions" value="152"/>
</dbReference>
<dbReference type="IntAct" id="O05253">
    <property type="interactions" value="1"/>
</dbReference>
<dbReference type="STRING" id="224308.BSU31550"/>
<dbReference type="PaxDb" id="224308-BSU31550"/>
<dbReference type="DNASU" id="937172"/>
<dbReference type="EnsemblBacteria" id="CAB15144">
    <property type="protein sequence ID" value="CAB15144"/>
    <property type="gene ID" value="BSU_31550"/>
</dbReference>
<dbReference type="GeneID" id="937172"/>
<dbReference type="KEGG" id="bsu:BSU31550"/>
<dbReference type="PATRIC" id="fig|224308.179.peg.3420"/>
<dbReference type="eggNOG" id="COG3845">
    <property type="taxonomic scope" value="Bacteria"/>
</dbReference>
<dbReference type="InParanoid" id="O05253"/>
<dbReference type="OrthoDB" id="9771863at2"/>
<dbReference type="PhylomeDB" id="O05253"/>
<dbReference type="BioCyc" id="BSUB:BSU31550-MONOMER"/>
<dbReference type="Proteomes" id="UP000001570">
    <property type="component" value="Chromosome"/>
</dbReference>
<dbReference type="GO" id="GO:0005886">
    <property type="term" value="C:plasma membrane"/>
    <property type="evidence" value="ECO:0007669"/>
    <property type="project" value="UniProtKB-SubCell"/>
</dbReference>
<dbReference type="GO" id="GO:0005524">
    <property type="term" value="F:ATP binding"/>
    <property type="evidence" value="ECO:0007669"/>
    <property type="project" value="UniProtKB-KW"/>
</dbReference>
<dbReference type="GO" id="GO:0016887">
    <property type="term" value="F:ATP hydrolysis activity"/>
    <property type="evidence" value="ECO:0007669"/>
    <property type="project" value="InterPro"/>
</dbReference>
<dbReference type="CDD" id="cd03216">
    <property type="entry name" value="ABC_Carb_Monos_I"/>
    <property type="match status" value="1"/>
</dbReference>
<dbReference type="CDD" id="cd03215">
    <property type="entry name" value="ABC_Carb_Monos_II"/>
    <property type="match status" value="1"/>
</dbReference>
<dbReference type="FunFam" id="3.40.50.300:FF:001390">
    <property type="entry name" value="ABC transporter, ATP-binding protein"/>
    <property type="match status" value="1"/>
</dbReference>
<dbReference type="FunFam" id="3.40.50.300:FF:000127">
    <property type="entry name" value="Ribose import ATP-binding protein RbsA"/>
    <property type="match status" value="1"/>
</dbReference>
<dbReference type="Gene3D" id="3.40.50.300">
    <property type="entry name" value="P-loop containing nucleotide triphosphate hydrolases"/>
    <property type="match status" value="2"/>
</dbReference>
<dbReference type="InterPro" id="IPR003593">
    <property type="entry name" value="AAA+_ATPase"/>
</dbReference>
<dbReference type="InterPro" id="IPR050107">
    <property type="entry name" value="ABC_carbohydrate_import_ATPase"/>
</dbReference>
<dbReference type="InterPro" id="IPR003439">
    <property type="entry name" value="ABC_transporter-like_ATP-bd"/>
</dbReference>
<dbReference type="InterPro" id="IPR017871">
    <property type="entry name" value="ABC_transporter-like_CS"/>
</dbReference>
<dbReference type="InterPro" id="IPR027417">
    <property type="entry name" value="P-loop_NTPase"/>
</dbReference>
<dbReference type="PANTHER" id="PTHR43790">
    <property type="entry name" value="CARBOHYDRATE TRANSPORT ATP-BINDING PROTEIN MG119-RELATED"/>
    <property type="match status" value="1"/>
</dbReference>
<dbReference type="PANTHER" id="PTHR43790:SF4">
    <property type="entry name" value="GUANOSINE IMPORT ATP-BINDING PROTEIN NUPO"/>
    <property type="match status" value="1"/>
</dbReference>
<dbReference type="Pfam" id="PF00005">
    <property type="entry name" value="ABC_tran"/>
    <property type="match status" value="2"/>
</dbReference>
<dbReference type="SMART" id="SM00382">
    <property type="entry name" value="AAA"/>
    <property type="match status" value="1"/>
</dbReference>
<dbReference type="SUPFAM" id="SSF52540">
    <property type="entry name" value="P-loop containing nucleoside triphosphate hydrolases"/>
    <property type="match status" value="2"/>
</dbReference>
<dbReference type="PROSITE" id="PS00211">
    <property type="entry name" value="ABC_TRANSPORTER_1"/>
    <property type="match status" value="2"/>
</dbReference>
<dbReference type="PROSITE" id="PS50893">
    <property type="entry name" value="ABC_TRANSPORTER_2"/>
    <property type="match status" value="2"/>
</dbReference>
<organism>
    <name type="scientific">Bacillus subtilis (strain 168)</name>
    <dbReference type="NCBI Taxonomy" id="224308"/>
    <lineage>
        <taxon>Bacteria</taxon>
        <taxon>Bacillati</taxon>
        <taxon>Bacillota</taxon>
        <taxon>Bacilli</taxon>
        <taxon>Bacillales</taxon>
        <taxon>Bacillaceae</taxon>
        <taxon>Bacillus</taxon>
    </lineage>
</organism>
<feature type="chain" id="PRO_0000360558" description="Guanosine import ATP-binding protein NupO">
    <location>
        <begin position="1"/>
        <end position="510"/>
    </location>
</feature>
<feature type="domain" description="ABC transporter 1" evidence="1">
    <location>
        <begin position="5"/>
        <end position="240"/>
    </location>
</feature>
<feature type="domain" description="ABC transporter 2" evidence="1">
    <location>
        <begin position="257"/>
        <end position="501"/>
    </location>
</feature>
<feature type="binding site" evidence="1">
    <location>
        <begin position="37"/>
        <end position="44"/>
    </location>
    <ligand>
        <name>ATP</name>
        <dbReference type="ChEBI" id="CHEBI:30616"/>
    </ligand>
</feature>
<proteinExistence type="evidence at protein level"/>
<gene>
    <name evidence="3" type="primary">nupO</name>
    <name type="synonym">yufO</name>
    <name type="ordered locus">BSU31550</name>
</gene>
<protein>
    <recommendedName>
        <fullName evidence="4">Guanosine import ATP-binding protein NupO</fullName>
        <ecNumber evidence="5">7.6.2.-</ecNumber>
    </recommendedName>
</protein>
<sequence>MEYVIEMLNIRKAFPGIVANDNINLQVKKGEIHALLGENGAGKSTLMNVLFGLYQPERGEIRVRGEKVHINSPNKANDLGIGMVHQHFMLVDTFTVAENIILGKEPKKFGRIDRKRAGQEVQDISDRYGLQIHPEAKAADISVGMQQRAEILKTLYRGADILIFDEPTAVLTPHEIKELMQIMKNLVKEGKSIILITHKLKEIMEICDRVTVIRKGKGIKTLDVRDTNQDELASLMVGREVSFKTEKRAAQPGAEVLAIDGITVKDTRGIETVRDLSLSVKAGEIVGIAGVDGNGQSELIEAVTGLRKTDSGTITLNGKQIQNLTPRKITESGIGHIPQDRHKHGLVLDFPIGENILLQSYYKKPYSALGVLHKGEMYKKARSLITEYDVRTPDEYTHARALSGGNQQKAIIGREIDRNPDLLIAAQPTRGLDVGAIEFVHKKLIEQRDAGKAVLLLSFELEEIMNLSDRIAVIFEGRIIASVNPQETTEQELGLLMAGSTQKEAGKANG</sequence>
<accession>O05253</accession>
<accession>Q795M1</accession>
<keyword id="KW-0067">ATP-binding</keyword>
<keyword id="KW-1003">Cell membrane</keyword>
<keyword id="KW-0472">Membrane</keyword>
<keyword id="KW-0547">Nucleotide-binding</keyword>
<keyword id="KW-1185">Reference proteome</keyword>
<keyword id="KW-0677">Repeat</keyword>
<keyword id="KW-1278">Translocase</keyword>
<keyword id="KW-0813">Transport</keyword>